<proteinExistence type="evidence at transcript level"/>
<feature type="chain" id="PRO_0000223509" description="RAC-beta serine/threonine-protein kinase B">
    <location>
        <begin position="1"/>
        <end position="485"/>
    </location>
</feature>
<feature type="domain" description="PH" evidence="6">
    <location>
        <begin position="5"/>
        <end position="109"/>
    </location>
</feature>
<feature type="domain" description="Protein kinase" evidence="7">
    <location>
        <begin position="156"/>
        <end position="413"/>
    </location>
</feature>
<feature type="domain" description="AGC-kinase C-terminal" evidence="8">
    <location>
        <begin position="414"/>
        <end position="485"/>
    </location>
</feature>
<feature type="region of interest" description="Disordered" evidence="10">
    <location>
        <begin position="454"/>
        <end position="485"/>
    </location>
</feature>
<feature type="compositionally biased region" description="Basic and acidic residues" evidence="10">
    <location>
        <begin position="458"/>
        <end position="472"/>
    </location>
</feature>
<feature type="active site" description="Proton acceptor" evidence="7 9">
    <location>
        <position position="279"/>
    </location>
</feature>
<feature type="binding site" evidence="7">
    <location>
        <begin position="162"/>
        <end position="170"/>
    </location>
    <ligand>
        <name>ATP</name>
        <dbReference type="ChEBI" id="CHEBI:30616"/>
    </ligand>
</feature>
<feature type="binding site" evidence="7">
    <location>
        <position position="185"/>
    </location>
    <ligand>
        <name>ATP</name>
        <dbReference type="ChEBI" id="CHEBI:30616"/>
    </ligand>
</feature>
<feature type="modified residue" description="Phosphothreonine" evidence="5">
    <location>
        <position position="313"/>
    </location>
</feature>
<feature type="modified residue" description="Phosphoserine" evidence="4">
    <location>
        <position position="478"/>
    </location>
</feature>
<feature type="glycosylation site" description="O-linked (GlcNAc) serine" evidence="2">
    <location>
        <position position="132"/>
    </location>
</feature>
<feature type="glycosylation site" description="O-linked (GlcNAc) serine" evidence="2">
    <location>
        <position position="135"/>
    </location>
</feature>
<feature type="glycosylation site" description="O-linked (GlcNAc) threonine" evidence="2">
    <location>
        <position position="310"/>
    </location>
</feature>
<feature type="glycosylation site" description="O-linked (GlcNAc) threonine" evidence="2">
    <location>
        <position position="317"/>
    </location>
</feature>
<feature type="glycosylation site" description="O-linked (GlcNAc) serine; alternate" evidence="3">
    <location>
        <position position="478"/>
    </location>
</feature>
<name>AKT2B_XENLA</name>
<dbReference type="EC" id="2.7.11.1"/>
<dbReference type="EMBL" id="BC072041">
    <property type="protein sequence ID" value="AAH72041.1"/>
    <property type="molecule type" value="mRNA"/>
</dbReference>
<dbReference type="RefSeq" id="NP_001085101.1">
    <property type="nucleotide sequence ID" value="NM_001091632.1"/>
</dbReference>
<dbReference type="SMR" id="Q6IP76"/>
<dbReference type="GlyCosmos" id="Q6IP76">
    <property type="glycosylation" value="4 sites, No reported glycans"/>
</dbReference>
<dbReference type="DNASU" id="432172"/>
<dbReference type="GeneID" id="432172"/>
<dbReference type="KEGG" id="xla:432172"/>
<dbReference type="AGR" id="Xenbase:XB-GENE-17345542"/>
<dbReference type="CTD" id="432172"/>
<dbReference type="Xenbase" id="XB-GENE-17345542">
    <property type="gene designation" value="akt2.S"/>
</dbReference>
<dbReference type="OrthoDB" id="63267at2759"/>
<dbReference type="Proteomes" id="UP000186698">
    <property type="component" value="Chromosome 8S"/>
</dbReference>
<dbReference type="Bgee" id="432172">
    <property type="expression patterns" value="Expressed in blastula and 19 other cell types or tissues"/>
</dbReference>
<dbReference type="GO" id="GO:0005938">
    <property type="term" value="C:cell cortex"/>
    <property type="evidence" value="ECO:0000250"/>
    <property type="project" value="UniProtKB"/>
</dbReference>
<dbReference type="GO" id="GO:0005737">
    <property type="term" value="C:cytoplasm"/>
    <property type="evidence" value="ECO:0000318"/>
    <property type="project" value="GO_Central"/>
</dbReference>
<dbReference type="GO" id="GO:0005634">
    <property type="term" value="C:nucleus"/>
    <property type="evidence" value="ECO:0000318"/>
    <property type="project" value="GO_Central"/>
</dbReference>
<dbReference type="GO" id="GO:0005886">
    <property type="term" value="C:plasma membrane"/>
    <property type="evidence" value="ECO:0000250"/>
    <property type="project" value="UniProtKB"/>
</dbReference>
<dbReference type="GO" id="GO:0032587">
    <property type="term" value="C:ruffle membrane"/>
    <property type="evidence" value="ECO:0000250"/>
    <property type="project" value="UniProtKB"/>
</dbReference>
<dbReference type="GO" id="GO:0005524">
    <property type="term" value="F:ATP binding"/>
    <property type="evidence" value="ECO:0007669"/>
    <property type="project" value="UniProtKB-KW"/>
</dbReference>
<dbReference type="GO" id="GO:0106310">
    <property type="term" value="F:protein serine kinase activity"/>
    <property type="evidence" value="ECO:0007669"/>
    <property type="project" value="RHEA"/>
</dbReference>
<dbReference type="GO" id="GO:0004674">
    <property type="term" value="F:protein serine/threonine kinase activity"/>
    <property type="evidence" value="ECO:0000318"/>
    <property type="project" value="GO_Central"/>
</dbReference>
<dbReference type="GO" id="GO:0090314">
    <property type="term" value="P:positive regulation of protein targeting to membrane"/>
    <property type="evidence" value="ECO:0000250"/>
    <property type="project" value="UniProtKB"/>
</dbReference>
<dbReference type="GO" id="GO:0043434">
    <property type="term" value="P:response to peptide hormone"/>
    <property type="evidence" value="ECO:0000318"/>
    <property type="project" value="GO_Central"/>
</dbReference>
<dbReference type="CDD" id="cd01241">
    <property type="entry name" value="PH_PKB"/>
    <property type="match status" value="1"/>
</dbReference>
<dbReference type="CDD" id="cd05595">
    <property type="entry name" value="STKc_PKB_beta"/>
    <property type="match status" value="1"/>
</dbReference>
<dbReference type="FunFam" id="1.10.510.10:FF:000033">
    <property type="entry name" value="Non-specific serine/threonine protein kinase"/>
    <property type="match status" value="1"/>
</dbReference>
<dbReference type="FunFam" id="2.30.29.30:FF:000027">
    <property type="entry name" value="Non-specific serine/threonine protein kinase"/>
    <property type="match status" value="1"/>
</dbReference>
<dbReference type="FunFam" id="3.30.200.20:FF:000838">
    <property type="entry name" value="Non-specific serine/threonine protein kinase"/>
    <property type="match status" value="1"/>
</dbReference>
<dbReference type="Gene3D" id="3.30.200.20">
    <property type="entry name" value="Phosphorylase Kinase, domain 1"/>
    <property type="match status" value="1"/>
</dbReference>
<dbReference type="Gene3D" id="2.30.29.30">
    <property type="entry name" value="Pleckstrin-homology domain (PH domain)/Phosphotyrosine-binding domain (PTB)"/>
    <property type="match status" value="1"/>
</dbReference>
<dbReference type="Gene3D" id="1.10.510.10">
    <property type="entry name" value="Transferase(Phosphotransferase) domain 1"/>
    <property type="match status" value="1"/>
</dbReference>
<dbReference type="InterPro" id="IPR000961">
    <property type="entry name" value="AGC-kinase_C"/>
</dbReference>
<dbReference type="InterPro" id="IPR034677">
    <property type="entry name" value="Akt2"/>
</dbReference>
<dbReference type="InterPro" id="IPR011009">
    <property type="entry name" value="Kinase-like_dom_sf"/>
</dbReference>
<dbReference type="InterPro" id="IPR011993">
    <property type="entry name" value="PH-like_dom_sf"/>
</dbReference>
<dbReference type="InterPro" id="IPR001849">
    <property type="entry name" value="PH_domain"/>
</dbReference>
<dbReference type="InterPro" id="IPR039026">
    <property type="entry name" value="PH_PKB"/>
</dbReference>
<dbReference type="InterPro" id="IPR017892">
    <property type="entry name" value="Pkinase_C"/>
</dbReference>
<dbReference type="InterPro" id="IPR000719">
    <property type="entry name" value="Prot_kinase_dom"/>
</dbReference>
<dbReference type="InterPro" id="IPR017441">
    <property type="entry name" value="Protein_kinase_ATP_BS"/>
</dbReference>
<dbReference type="InterPro" id="IPR008271">
    <property type="entry name" value="Ser/Thr_kinase_AS"/>
</dbReference>
<dbReference type="PANTHER" id="PTHR24351">
    <property type="entry name" value="RIBOSOMAL PROTEIN S6 KINASE"/>
    <property type="match status" value="1"/>
</dbReference>
<dbReference type="Pfam" id="PF00169">
    <property type="entry name" value="PH"/>
    <property type="match status" value="1"/>
</dbReference>
<dbReference type="Pfam" id="PF00069">
    <property type="entry name" value="Pkinase"/>
    <property type="match status" value="1"/>
</dbReference>
<dbReference type="Pfam" id="PF00433">
    <property type="entry name" value="Pkinase_C"/>
    <property type="match status" value="1"/>
</dbReference>
<dbReference type="SMART" id="SM00233">
    <property type="entry name" value="PH"/>
    <property type="match status" value="1"/>
</dbReference>
<dbReference type="SMART" id="SM00133">
    <property type="entry name" value="S_TK_X"/>
    <property type="match status" value="1"/>
</dbReference>
<dbReference type="SMART" id="SM00220">
    <property type="entry name" value="S_TKc"/>
    <property type="match status" value="1"/>
</dbReference>
<dbReference type="SUPFAM" id="SSF50729">
    <property type="entry name" value="PH domain-like"/>
    <property type="match status" value="1"/>
</dbReference>
<dbReference type="SUPFAM" id="SSF56112">
    <property type="entry name" value="Protein kinase-like (PK-like)"/>
    <property type="match status" value="1"/>
</dbReference>
<dbReference type="PROSITE" id="PS51285">
    <property type="entry name" value="AGC_KINASE_CTER"/>
    <property type="match status" value="1"/>
</dbReference>
<dbReference type="PROSITE" id="PS50003">
    <property type="entry name" value="PH_DOMAIN"/>
    <property type="match status" value="1"/>
</dbReference>
<dbReference type="PROSITE" id="PS00107">
    <property type="entry name" value="PROTEIN_KINASE_ATP"/>
    <property type="match status" value="1"/>
</dbReference>
<dbReference type="PROSITE" id="PS50011">
    <property type="entry name" value="PROTEIN_KINASE_DOM"/>
    <property type="match status" value="1"/>
</dbReference>
<dbReference type="PROSITE" id="PS00108">
    <property type="entry name" value="PROTEIN_KINASE_ST"/>
    <property type="match status" value="1"/>
</dbReference>
<evidence type="ECO:0000250" key="1"/>
<evidence type="ECO:0000250" key="2">
    <source>
        <dbReference type="UniProtKB" id="P31749"/>
    </source>
</evidence>
<evidence type="ECO:0000250" key="3">
    <source>
        <dbReference type="UniProtKB" id="P31750"/>
    </source>
</evidence>
<evidence type="ECO:0000250" key="4">
    <source>
        <dbReference type="UniProtKB" id="P31751"/>
    </source>
</evidence>
<evidence type="ECO:0000250" key="5">
    <source>
        <dbReference type="UniProtKB" id="Q60823"/>
    </source>
</evidence>
<evidence type="ECO:0000255" key="6">
    <source>
        <dbReference type="PROSITE-ProRule" id="PRU00145"/>
    </source>
</evidence>
<evidence type="ECO:0000255" key="7">
    <source>
        <dbReference type="PROSITE-ProRule" id="PRU00159"/>
    </source>
</evidence>
<evidence type="ECO:0000255" key="8">
    <source>
        <dbReference type="PROSITE-ProRule" id="PRU00618"/>
    </source>
</evidence>
<evidence type="ECO:0000255" key="9">
    <source>
        <dbReference type="PROSITE-ProRule" id="PRU10027"/>
    </source>
</evidence>
<evidence type="ECO:0000256" key="10">
    <source>
        <dbReference type="SAM" id="MobiDB-lite"/>
    </source>
</evidence>
<evidence type="ECO:0000305" key="11"/>
<evidence type="ECO:0000312" key="12">
    <source>
        <dbReference type="EMBL" id="AAH72041.1"/>
    </source>
</evidence>
<reference evidence="12" key="1">
    <citation type="submission" date="2004-06" db="EMBL/GenBank/DDBJ databases">
        <authorList>
            <consortium name="NIH - Xenopus Gene Collection (XGC) project"/>
        </authorList>
    </citation>
    <scope>NUCLEOTIDE SEQUENCE [LARGE SCALE MRNA]</scope>
    <source>
        <tissue evidence="12">Spleen</tissue>
    </source>
</reference>
<protein>
    <recommendedName>
        <fullName>RAC-beta serine/threonine-protein kinase B</fullName>
        <ecNumber>2.7.11.1</ecNumber>
    </recommendedName>
    <alternativeName>
        <fullName>Protein kinase Akt-2-B</fullName>
    </alternativeName>
    <alternativeName>
        <fullName>Protein kinase B, beta-B</fullName>
        <shortName>PKB beta-B</shortName>
    </alternativeName>
    <alternativeName>
        <fullName>RAC-PK-beta-B</fullName>
    </alternativeName>
</protein>
<accession>Q6IP76</accession>
<comment type="function">
    <text evidence="1 4">Akt2-b is one of several closely related serine/threonine-protein kinases known as the AKT kinase, and which regulate many processes including metabolism, proliferation, cell survival, growth and angiogenesis. This is mediated through serine and/or threonine phosphorylation of a range of downstream substrates. Over 100 substrate candidates have been reported so far, but for most of them, no isoform specificity has been reported (By similarity). May be involved in the inhibition of ciliogenesis (By similarity).</text>
</comment>
<comment type="catalytic activity">
    <reaction evidence="5">
        <text>L-seryl-[protein] + ATP = O-phospho-L-seryl-[protein] + ADP + H(+)</text>
        <dbReference type="Rhea" id="RHEA:17989"/>
        <dbReference type="Rhea" id="RHEA-COMP:9863"/>
        <dbReference type="Rhea" id="RHEA-COMP:11604"/>
        <dbReference type="ChEBI" id="CHEBI:15378"/>
        <dbReference type="ChEBI" id="CHEBI:29999"/>
        <dbReference type="ChEBI" id="CHEBI:30616"/>
        <dbReference type="ChEBI" id="CHEBI:83421"/>
        <dbReference type="ChEBI" id="CHEBI:456216"/>
        <dbReference type="EC" id="2.7.11.1"/>
    </reaction>
</comment>
<comment type="catalytic activity">
    <reaction evidence="5">
        <text>L-threonyl-[protein] + ATP = O-phospho-L-threonyl-[protein] + ADP + H(+)</text>
        <dbReference type="Rhea" id="RHEA:46608"/>
        <dbReference type="Rhea" id="RHEA-COMP:11060"/>
        <dbReference type="Rhea" id="RHEA-COMP:11605"/>
        <dbReference type="ChEBI" id="CHEBI:15378"/>
        <dbReference type="ChEBI" id="CHEBI:30013"/>
        <dbReference type="ChEBI" id="CHEBI:30616"/>
        <dbReference type="ChEBI" id="CHEBI:61977"/>
        <dbReference type="ChEBI" id="CHEBI:456216"/>
        <dbReference type="EC" id="2.7.11.1"/>
    </reaction>
</comment>
<comment type="activity regulation">
    <text evidence="1">Two specific sites, one in the kinase domain (Thr-313) and the other in the C-terminal regulatory region (Ser-478), need to be phosphorylated for its full activation.</text>
</comment>
<comment type="PTM">
    <text evidence="2 3">Phosphorylation on Thr-313 and Ser-478 is required for full activity (By similarity). Phosphorylation of the activation loop at Thr-313 by PDPK1/PDK1 is a prerequisite for full activation (By similarity). Phosphorylation by mTORC2 at Ser-478 in response to growth factors plays a key role in AKT1 activation by facilitating subsequent phosphorylation of the activation loop by PDPK1/PDK1 (By similarity).</text>
</comment>
<comment type="similarity">
    <text evidence="11">Belongs to the protein kinase superfamily. AGC Ser/Thr protein kinase family. RAC subfamily.</text>
</comment>
<organism>
    <name type="scientific">Xenopus laevis</name>
    <name type="common">African clawed frog</name>
    <dbReference type="NCBI Taxonomy" id="8355"/>
    <lineage>
        <taxon>Eukaryota</taxon>
        <taxon>Metazoa</taxon>
        <taxon>Chordata</taxon>
        <taxon>Craniata</taxon>
        <taxon>Vertebrata</taxon>
        <taxon>Euteleostomi</taxon>
        <taxon>Amphibia</taxon>
        <taxon>Batrachia</taxon>
        <taxon>Anura</taxon>
        <taxon>Pipoidea</taxon>
        <taxon>Pipidae</taxon>
        <taxon>Xenopodinae</taxon>
        <taxon>Xenopus</taxon>
        <taxon>Xenopus</taxon>
    </lineage>
</organism>
<gene>
    <name type="primary">akt2-b</name>
</gene>
<keyword id="KW-0067">ATP-binding</keyword>
<keyword id="KW-0325">Glycoprotein</keyword>
<keyword id="KW-0418">Kinase</keyword>
<keyword id="KW-0547">Nucleotide-binding</keyword>
<keyword id="KW-0597">Phosphoprotein</keyword>
<keyword id="KW-1185">Reference proteome</keyword>
<keyword id="KW-0723">Serine/threonine-protein kinase</keyword>
<keyword id="KW-0808">Transferase</keyword>
<sequence length="485" mass="56024">MNEVMVIKEGWLQKRGEYIKTWRPRYFLLKSDGSFIGYKEKPDSTEHSLLPPLNNFSVAECQLMKTERPRPNTFVIRCLQWTTVIERTFHVDTPEEREEWIIAIQTVANGLKNQVPEDEEEEAMEVKYGSPSDVSSAEQMDVAMSKGRPKVTMNDFDYLKLLGKGTFGKVILVREKATGLYYAMKILRKEVIIAKDEVAHTLTESRVLQNTKHPFLTGLKYAFQTSDRLCFVMEYANGGELFFHLSRERVFTEDRARFYGAEIVSALEYLHSRNVVYRDIKLENLMLDKDGHVKITDFGLCKEGITDGATMRTFCGTPEYLAPEVLEDNDYGRAVDWWGLGVVMYEMMCGRLPFYNQDHERLFELILMEETRFPRTLSPEAKSLLAGLLKKDPKQRLGGGPDDAQEVMSHGFFASINWQDVTERKLSPPFKPQVTSEIDTRYFDDEFTAQSITLTPPDRYDNLDALESEQRPHFPQFSYSSSIRE</sequence>